<feature type="chain" id="PRO_0000190027" description="Invasion protein InvA">
    <location>
        <begin position="1"/>
        <end position="685"/>
    </location>
</feature>
<feature type="transmembrane region" description="Helical" evidence="2">
    <location>
        <begin position="17"/>
        <end position="37"/>
    </location>
</feature>
<feature type="transmembrane region" description="Helical" evidence="2">
    <location>
        <begin position="39"/>
        <end position="59"/>
    </location>
</feature>
<feature type="transmembrane region" description="Helical" evidence="2">
    <location>
        <begin position="61"/>
        <end position="81"/>
    </location>
</feature>
<feature type="transmembrane region" description="Helical" evidence="2">
    <location>
        <begin position="110"/>
        <end position="130"/>
    </location>
</feature>
<feature type="transmembrane region" description="Helical" evidence="2">
    <location>
        <begin position="197"/>
        <end position="217"/>
    </location>
</feature>
<feature type="transmembrane region" description="Helical" evidence="2">
    <location>
        <begin position="235"/>
        <end position="255"/>
    </location>
</feature>
<feature type="transmembrane region" description="Helical" evidence="2">
    <location>
        <begin position="274"/>
        <end position="294"/>
    </location>
</feature>
<feature type="transmembrane region" description="Helical" evidence="2">
    <location>
        <begin position="295"/>
        <end position="315"/>
    </location>
</feature>
<dbReference type="EMBL" id="AL513382">
    <property type="protein sequence ID" value="CAD06003.1"/>
    <property type="molecule type" value="Genomic_DNA"/>
</dbReference>
<dbReference type="EMBL" id="AE014613">
    <property type="protein sequence ID" value="AAO70359.1"/>
    <property type="molecule type" value="Genomic_DNA"/>
</dbReference>
<dbReference type="RefSeq" id="NP_457290.1">
    <property type="nucleotide sequence ID" value="NC_003198.1"/>
</dbReference>
<dbReference type="RefSeq" id="WP_000927219.1">
    <property type="nucleotide sequence ID" value="NZ_WSUR01000005.1"/>
</dbReference>
<dbReference type="SMR" id="P0A1I4"/>
<dbReference type="STRING" id="220341.gene:17586913"/>
<dbReference type="KEGG" id="stt:t2798"/>
<dbReference type="KEGG" id="sty:STY3019"/>
<dbReference type="PATRIC" id="fig|220341.7.peg.3073"/>
<dbReference type="eggNOG" id="COG4789">
    <property type="taxonomic scope" value="Bacteria"/>
</dbReference>
<dbReference type="HOGENOM" id="CLU_015346_3_0_6"/>
<dbReference type="OMA" id="MGSFYIE"/>
<dbReference type="OrthoDB" id="9759185at2"/>
<dbReference type="PHI-base" id="PHI:647"/>
<dbReference type="PHI-base" id="PHI:9467"/>
<dbReference type="Proteomes" id="UP000000541">
    <property type="component" value="Chromosome"/>
</dbReference>
<dbReference type="Proteomes" id="UP000002670">
    <property type="component" value="Chromosome"/>
</dbReference>
<dbReference type="GO" id="GO:0005886">
    <property type="term" value="C:plasma membrane"/>
    <property type="evidence" value="ECO:0007669"/>
    <property type="project" value="UniProtKB-SubCell"/>
</dbReference>
<dbReference type="GO" id="GO:0009306">
    <property type="term" value="P:protein secretion"/>
    <property type="evidence" value="ECO:0007669"/>
    <property type="project" value="InterPro"/>
</dbReference>
<dbReference type="Gene3D" id="3.40.30.60">
    <property type="entry name" value="FHIPEP family, domain 1"/>
    <property type="match status" value="1"/>
</dbReference>
<dbReference type="Gene3D" id="3.40.5.40">
    <property type="entry name" value="FHIPEP family, domain 2"/>
    <property type="match status" value="1"/>
</dbReference>
<dbReference type="Gene3D" id="1.10.8.540">
    <property type="entry name" value="FHIPEP family, domain 3"/>
    <property type="match status" value="1"/>
</dbReference>
<dbReference type="Gene3D" id="3.40.50.12790">
    <property type="entry name" value="FHIPEP family, domain 4"/>
    <property type="match status" value="1"/>
</dbReference>
<dbReference type="InterPro" id="IPR042194">
    <property type="entry name" value="FHIPEP_1"/>
</dbReference>
<dbReference type="InterPro" id="IPR042193">
    <property type="entry name" value="FHIPEP_3"/>
</dbReference>
<dbReference type="InterPro" id="IPR042196">
    <property type="entry name" value="FHIPEP_4"/>
</dbReference>
<dbReference type="InterPro" id="IPR025505">
    <property type="entry name" value="FHIPEP_CS"/>
</dbReference>
<dbReference type="InterPro" id="IPR001712">
    <property type="entry name" value="T3SS_FHIPEP"/>
</dbReference>
<dbReference type="InterPro" id="IPR006302">
    <property type="entry name" value="T3SS_HrcV"/>
</dbReference>
<dbReference type="NCBIfam" id="TIGR01399">
    <property type="entry name" value="hrcV"/>
    <property type="match status" value="1"/>
</dbReference>
<dbReference type="NCBIfam" id="NF011865">
    <property type="entry name" value="PRK15337.1"/>
    <property type="match status" value="1"/>
</dbReference>
<dbReference type="PANTHER" id="PTHR30161">
    <property type="entry name" value="FLAGELLAR EXPORT PROTEIN, MEMBRANE FLHA SUBUNIT-RELATED"/>
    <property type="match status" value="1"/>
</dbReference>
<dbReference type="PANTHER" id="PTHR30161:SF2">
    <property type="entry name" value="INVASION PROTEIN INVA"/>
    <property type="match status" value="1"/>
</dbReference>
<dbReference type="Pfam" id="PF00771">
    <property type="entry name" value="FHIPEP"/>
    <property type="match status" value="1"/>
</dbReference>
<dbReference type="PIRSF" id="PIRSF005419">
    <property type="entry name" value="FlhA"/>
    <property type="match status" value="1"/>
</dbReference>
<dbReference type="PRINTS" id="PR00949">
    <property type="entry name" value="TYPE3IMAPROT"/>
</dbReference>
<dbReference type="PROSITE" id="PS00994">
    <property type="entry name" value="FHIPEP"/>
    <property type="match status" value="1"/>
</dbReference>
<organism>
    <name type="scientific">Salmonella typhi</name>
    <dbReference type="NCBI Taxonomy" id="90370"/>
    <lineage>
        <taxon>Bacteria</taxon>
        <taxon>Pseudomonadati</taxon>
        <taxon>Pseudomonadota</taxon>
        <taxon>Gammaproteobacteria</taxon>
        <taxon>Enterobacterales</taxon>
        <taxon>Enterobacteriaceae</taxon>
        <taxon>Salmonella</taxon>
    </lineage>
</organism>
<accession>P0A1I4</accession>
<accession>P35657</accession>
<accession>Q57033</accession>
<accession>Q57173</accession>
<accession>Q57186</accession>
<accession>Q57531</accession>
<reference key="1">
    <citation type="journal article" date="2001" name="Nature">
        <title>Complete genome sequence of a multiple drug resistant Salmonella enterica serovar Typhi CT18.</title>
        <authorList>
            <person name="Parkhill J."/>
            <person name="Dougan G."/>
            <person name="James K.D."/>
            <person name="Thomson N.R."/>
            <person name="Pickard D."/>
            <person name="Wain J."/>
            <person name="Churcher C.M."/>
            <person name="Mungall K.L."/>
            <person name="Bentley S.D."/>
            <person name="Holden M.T.G."/>
            <person name="Sebaihia M."/>
            <person name="Baker S."/>
            <person name="Basham D."/>
            <person name="Brooks K."/>
            <person name="Chillingworth T."/>
            <person name="Connerton P."/>
            <person name="Cronin A."/>
            <person name="Davis P."/>
            <person name="Davies R.M."/>
            <person name="Dowd L."/>
            <person name="White N."/>
            <person name="Farrar J."/>
            <person name="Feltwell T."/>
            <person name="Hamlin N."/>
            <person name="Haque A."/>
            <person name="Hien T.T."/>
            <person name="Holroyd S."/>
            <person name="Jagels K."/>
            <person name="Krogh A."/>
            <person name="Larsen T.S."/>
            <person name="Leather S."/>
            <person name="Moule S."/>
            <person name="O'Gaora P."/>
            <person name="Parry C."/>
            <person name="Quail M.A."/>
            <person name="Rutherford K.M."/>
            <person name="Simmonds M."/>
            <person name="Skelton J."/>
            <person name="Stevens K."/>
            <person name="Whitehead S."/>
            <person name="Barrell B.G."/>
        </authorList>
    </citation>
    <scope>NUCLEOTIDE SEQUENCE [LARGE SCALE GENOMIC DNA]</scope>
    <source>
        <strain>CT18</strain>
    </source>
</reference>
<reference key="2">
    <citation type="journal article" date="2003" name="J. Bacteriol.">
        <title>Comparative genomics of Salmonella enterica serovar Typhi strains Ty2 and CT18.</title>
        <authorList>
            <person name="Deng W."/>
            <person name="Liou S.-R."/>
            <person name="Plunkett G. III"/>
            <person name="Mayhew G.F."/>
            <person name="Rose D.J."/>
            <person name="Burland V."/>
            <person name="Kodoyianni V."/>
            <person name="Schwartz D.C."/>
            <person name="Blattner F.R."/>
        </authorList>
    </citation>
    <scope>NUCLEOTIDE SEQUENCE [LARGE SCALE GENOMIC DNA]</scope>
    <source>
        <strain>ATCC 700931 / Ty2</strain>
    </source>
</reference>
<gene>
    <name type="primary">invA</name>
    <name type="ordered locus">STY3019</name>
    <name type="ordered locus">t2798</name>
</gene>
<sequence>MLLSLLNSARLRPELLILVLMVMIISMFVIPLPTYLVDFLIALNIVLAILVFMGSFYIDRILSFSTFPAVLLITTLFRLALSISTSRLILIEADAGEIIATFGQFVIGDSLAVGFVVFSIVTVVQFIVITKGSERVAEVAARFSLDGMPGKQMSIDADLKAGIIDADAARERRSVLERESQLYGSFDGAMKFIKGDAIAGIIIIFVNFIGGISVGMTRHGMDLSSALSTYTMLTIGDGLVAQIPALLIAISAGFIVTRVNGDSDNMGRNIMTQLLNNPFVLVVTAILTISMGTLPGFPLPVFVILSVVLSVLFYFKFREAKRSAAKPKTSKGEQPLSIEEKEGSSLGLIGDLDKVSTETVPLILLVPKSRREDLEKAQLAERLRSQFFIDYGVRLPEVLLRDGEGLDDNSIVLLINEIRVEQFTVYFDLMRVVNYSDEVVSFGINPTIHQQGSSQYFWVTHEEGEKLRELGYVLRNALDELYHCLAVTLARNVNEYFGIQETKHMLDQLEAKFPDLLKEVLRHATVQRISEVLQRLLSERVSVRNMKLIMEALALWAPREKDVINLVEHIRGAMARYICHKFANGGELRAVMVSAEVEDVIRKGIRQTSGSTFLSLDPEASANLMDLITLKLDDLLIAHKDLVLLTSVDVRRFIKKMIEGRFPDLEVLSFGEIADSKSVNVIKTI</sequence>
<proteinExistence type="inferred from homology"/>
<name>INVA_SALTI</name>
<comment type="function">
    <text evidence="1">Involved in the invasion of the cells of the intestinal epithelium. Could be involved in the translocation of the InvE protein (By similarity).</text>
</comment>
<comment type="subcellular location">
    <subcellularLocation>
        <location evidence="3">Cell inner membrane</location>
        <topology evidence="3">Multi-pass membrane protein</topology>
    </subcellularLocation>
</comment>
<comment type="similarity">
    <text evidence="3">Belongs to the FHIPEP (flagella/HR/invasion proteins export pore) family.</text>
</comment>
<evidence type="ECO:0000250" key="1"/>
<evidence type="ECO:0000255" key="2"/>
<evidence type="ECO:0000305" key="3"/>
<keyword id="KW-0997">Cell inner membrane</keyword>
<keyword id="KW-1003">Cell membrane</keyword>
<keyword id="KW-0472">Membrane</keyword>
<keyword id="KW-0653">Protein transport</keyword>
<keyword id="KW-0812">Transmembrane</keyword>
<keyword id="KW-1133">Transmembrane helix</keyword>
<keyword id="KW-0813">Transport</keyword>
<keyword id="KW-0843">Virulence</keyword>
<protein>
    <recommendedName>
        <fullName>Invasion protein InvA</fullName>
    </recommendedName>
</protein>